<dbReference type="EMBL" id="M10044">
    <property type="protein sequence ID" value="AAA23718.1"/>
    <property type="molecule type" value="Genomic_DNA"/>
</dbReference>
<dbReference type="EMBL" id="U14003">
    <property type="protein sequence ID" value="AAA97297.1"/>
    <property type="molecule type" value="Genomic_DNA"/>
</dbReference>
<dbReference type="EMBL" id="U00096">
    <property type="protein sequence ID" value="AAC77354.1"/>
    <property type="molecule type" value="Genomic_DNA"/>
</dbReference>
<dbReference type="EMBL" id="AP009048">
    <property type="protein sequence ID" value="BAE78390.1"/>
    <property type="molecule type" value="Genomic_DNA"/>
</dbReference>
<dbReference type="EMBL" id="L34010">
    <property type="protein sequence ID" value="AAA23476.1"/>
    <property type="molecule type" value="Genomic_DNA"/>
</dbReference>
<dbReference type="PIR" id="A03561">
    <property type="entry name" value="JYECR"/>
</dbReference>
<dbReference type="RefSeq" id="NP_418818.1">
    <property type="nucleotide sequence ID" value="NC_000913.3"/>
</dbReference>
<dbReference type="RefSeq" id="WP_001194358.1">
    <property type="nucleotide sequence ID" value="NZ_STEB01000033.1"/>
</dbReference>
<dbReference type="PDB" id="1XHE">
    <property type="method" value="X-ray"/>
    <property type="resolution" value="2.50 A"/>
    <property type="chains" value="A/B=1-123"/>
</dbReference>
<dbReference type="PDB" id="1XHF">
    <property type="method" value="X-ray"/>
    <property type="resolution" value="2.15 A"/>
    <property type="chains" value="A/B=1-123"/>
</dbReference>
<dbReference type="PDBsum" id="1XHE"/>
<dbReference type="PDBsum" id="1XHF"/>
<dbReference type="SMR" id="P0A9Q1"/>
<dbReference type="BioGRID" id="4259386">
    <property type="interactions" value="145"/>
</dbReference>
<dbReference type="DIP" id="DIP-36035N"/>
<dbReference type="FunCoup" id="P0A9Q1">
    <property type="interactions" value="410"/>
</dbReference>
<dbReference type="IntAct" id="P0A9Q1">
    <property type="interactions" value="7"/>
</dbReference>
<dbReference type="STRING" id="511145.b4401"/>
<dbReference type="jPOST" id="P0A9Q1"/>
<dbReference type="PaxDb" id="511145-b4401"/>
<dbReference type="EnsemblBacteria" id="AAC77354">
    <property type="protein sequence ID" value="AAC77354"/>
    <property type="gene ID" value="b4401"/>
</dbReference>
<dbReference type="GeneID" id="93777444"/>
<dbReference type="GeneID" id="948874"/>
<dbReference type="KEGG" id="ecj:JW4364"/>
<dbReference type="KEGG" id="eco:b4401"/>
<dbReference type="KEGG" id="ecoc:C3026_23780"/>
<dbReference type="PATRIC" id="fig|1411691.4.peg.2283"/>
<dbReference type="EchoBASE" id="EB0059"/>
<dbReference type="eggNOG" id="COG0745">
    <property type="taxonomic scope" value="Bacteria"/>
</dbReference>
<dbReference type="HOGENOM" id="CLU_000445_30_4_6"/>
<dbReference type="InParanoid" id="P0A9Q1"/>
<dbReference type="OMA" id="ADDWMTK"/>
<dbReference type="OrthoDB" id="9802426at2"/>
<dbReference type="PhylomeDB" id="P0A9Q1"/>
<dbReference type="BioCyc" id="EcoCyc:ARCA-MONOMER"/>
<dbReference type="EvolutionaryTrace" id="P0A9Q1"/>
<dbReference type="PHI-base" id="PHI:6532"/>
<dbReference type="PRO" id="PR:P0A9Q1"/>
<dbReference type="Proteomes" id="UP000000625">
    <property type="component" value="Chromosome"/>
</dbReference>
<dbReference type="CollecTF" id="EXPREG_00000800"/>
<dbReference type="GO" id="GO:0005829">
    <property type="term" value="C:cytosol"/>
    <property type="evidence" value="ECO:0000314"/>
    <property type="project" value="EcoCyc"/>
</dbReference>
<dbReference type="GO" id="GO:0032993">
    <property type="term" value="C:protein-DNA complex"/>
    <property type="evidence" value="ECO:0000353"/>
    <property type="project" value="CollecTF"/>
</dbReference>
<dbReference type="GO" id="GO:0003700">
    <property type="term" value="F:DNA-binding transcription factor activity"/>
    <property type="evidence" value="ECO:0000314"/>
    <property type="project" value="EcoCyc"/>
</dbReference>
<dbReference type="GO" id="GO:0001217">
    <property type="term" value="F:DNA-binding transcription repressor activity"/>
    <property type="evidence" value="ECO:0000353"/>
    <property type="project" value="CollecTF"/>
</dbReference>
<dbReference type="GO" id="GO:0042802">
    <property type="term" value="F:identical protein binding"/>
    <property type="evidence" value="ECO:0000353"/>
    <property type="project" value="IntAct"/>
</dbReference>
<dbReference type="GO" id="GO:0000156">
    <property type="term" value="F:phosphorelay response regulator activity"/>
    <property type="evidence" value="ECO:0000314"/>
    <property type="project" value="EcoCyc"/>
</dbReference>
<dbReference type="GO" id="GO:0000976">
    <property type="term" value="F:transcription cis-regulatory region binding"/>
    <property type="evidence" value="ECO:0000353"/>
    <property type="project" value="CollecTF"/>
</dbReference>
<dbReference type="GO" id="GO:0045892">
    <property type="term" value="P:negative regulation of DNA-templated transcription"/>
    <property type="evidence" value="ECO:0000314"/>
    <property type="project" value="EcoCyc"/>
</dbReference>
<dbReference type="GO" id="GO:0000160">
    <property type="term" value="P:phosphorelay signal transduction system"/>
    <property type="evidence" value="ECO:0000314"/>
    <property type="project" value="EcoCyc"/>
</dbReference>
<dbReference type="GO" id="GO:0045893">
    <property type="term" value="P:positive regulation of DNA-templated transcription"/>
    <property type="evidence" value="ECO:0000314"/>
    <property type="project" value="EcoCyc"/>
</dbReference>
<dbReference type="GO" id="GO:0006355">
    <property type="term" value="P:regulation of DNA-templated transcription"/>
    <property type="evidence" value="ECO:0000314"/>
    <property type="project" value="EcoCyc"/>
</dbReference>
<dbReference type="CDD" id="cd17619">
    <property type="entry name" value="REC_OmpR_ArcA_TorR-like"/>
    <property type="match status" value="1"/>
</dbReference>
<dbReference type="CDD" id="cd00383">
    <property type="entry name" value="trans_reg_C"/>
    <property type="match status" value="1"/>
</dbReference>
<dbReference type="FunFam" id="1.10.10.10:FF:000054">
    <property type="entry name" value="Two-component system response regulator ArcA"/>
    <property type="match status" value="1"/>
</dbReference>
<dbReference type="FunFam" id="3.40.50.2300:FF:000006">
    <property type="entry name" value="Two-component system response regulator ArcA"/>
    <property type="match status" value="1"/>
</dbReference>
<dbReference type="Gene3D" id="3.40.50.2300">
    <property type="match status" value="1"/>
</dbReference>
<dbReference type="Gene3D" id="6.10.250.690">
    <property type="match status" value="1"/>
</dbReference>
<dbReference type="Gene3D" id="1.10.10.10">
    <property type="entry name" value="Winged helix-like DNA-binding domain superfamily/Winged helix DNA-binding domain"/>
    <property type="match status" value="1"/>
</dbReference>
<dbReference type="InterPro" id="IPR011006">
    <property type="entry name" value="CheY-like_superfamily"/>
</dbReference>
<dbReference type="InterPro" id="IPR001867">
    <property type="entry name" value="OmpR/PhoB-type_DNA-bd"/>
</dbReference>
<dbReference type="InterPro" id="IPR016032">
    <property type="entry name" value="Sig_transdc_resp-reg_C-effctor"/>
</dbReference>
<dbReference type="InterPro" id="IPR001789">
    <property type="entry name" value="Sig_transdc_resp-reg_receiver"/>
</dbReference>
<dbReference type="InterPro" id="IPR039420">
    <property type="entry name" value="WalR-like"/>
</dbReference>
<dbReference type="InterPro" id="IPR036388">
    <property type="entry name" value="WH-like_DNA-bd_sf"/>
</dbReference>
<dbReference type="NCBIfam" id="NF008378">
    <property type="entry name" value="PRK11173.1"/>
    <property type="match status" value="1"/>
</dbReference>
<dbReference type="PANTHER" id="PTHR48111:SF55">
    <property type="entry name" value="AEROBIC RESPIRATION CONTROL PROTEIN ARCA"/>
    <property type="match status" value="1"/>
</dbReference>
<dbReference type="PANTHER" id="PTHR48111">
    <property type="entry name" value="REGULATOR OF RPOS"/>
    <property type="match status" value="1"/>
</dbReference>
<dbReference type="Pfam" id="PF00072">
    <property type="entry name" value="Response_reg"/>
    <property type="match status" value="1"/>
</dbReference>
<dbReference type="Pfam" id="PF00486">
    <property type="entry name" value="Trans_reg_C"/>
    <property type="match status" value="1"/>
</dbReference>
<dbReference type="SMART" id="SM00448">
    <property type="entry name" value="REC"/>
    <property type="match status" value="1"/>
</dbReference>
<dbReference type="SMART" id="SM00862">
    <property type="entry name" value="Trans_reg_C"/>
    <property type="match status" value="1"/>
</dbReference>
<dbReference type="SUPFAM" id="SSF46894">
    <property type="entry name" value="C-terminal effector domain of the bipartite response regulators"/>
    <property type="match status" value="1"/>
</dbReference>
<dbReference type="SUPFAM" id="SSF52172">
    <property type="entry name" value="CheY-like"/>
    <property type="match status" value="1"/>
</dbReference>
<dbReference type="PROSITE" id="PS51755">
    <property type="entry name" value="OMPR_PHOB"/>
    <property type="match status" value="1"/>
</dbReference>
<dbReference type="PROSITE" id="PS50110">
    <property type="entry name" value="RESPONSE_REGULATORY"/>
    <property type="match status" value="1"/>
</dbReference>
<organism>
    <name type="scientific">Escherichia coli (strain K12)</name>
    <dbReference type="NCBI Taxonomy" id="83333"/>
    <lineage>
        <taxon>Bacteria</taxon>
        <taxon>Pseudomonadati</taxon>
        <taxon>Pseudomonadota</taxon>
        <taxon>Gammaproteobacteria</taxon>
        <taxon>Enterobacterales</taxon>
        <taxon>Enterobacteriaceae</taxon>
        <taxon>Escherichia</taxon>
    </lineage>
</organism>
<protein>
    <recommendedName>
        <fullName>Aerobic respiration control protein ArcA</fullName>
    </recommendedName>
    <alternativeName>
        <fullName>Dye resistance protein</fullName>
    </alternativeName>
</protein>
<comment type="function">
    <text>Member of the two-component regulatory system ArcB/ArcA. Represses a wide variety of aerobic enzymes under anaerobic conditions. Controls the resistance of E.coli to dyes; required for expression of the alkaline phosphatase and sex factor F genes; it may also be involved in the osmoregulation of envelope proteins. When activated by ArcB, it negatively regulates the expression of genes of aerobic function. Activates the transcription of the plfB operon by binding to its promoter.</text>
</comment>
<comment type="interaction">
    <interactant intactId="EBI-1119939">
        <id>P0A9Q1</id>
    </interactant>
    <interactant intactId="EBI-1119939">
        <id>P0A9Q1</id>
        <label>arcA</label>
    </interactant>
    <organismsDiffer>false</organismsDiffer>
    <experiments>2</experiments>
</comment>
<comment type="interaction">
    <interactant intactId="EBI-1119939">
        <id>P0A9Q1</id>
    </interactant>
    <interactant intactId="EBI-6400435">
        <id>P52002</id>
        <label>mexB</label>
    </interactant>
    <organismsDiffer>true</organismsDiffer>
    <experiments>2</experiments>
</comment>
<comment type="subcellular location">
    <subcellularLocation>
        <location evidence="3">Cytoplasm</location>
    </subcellularLocation>
</comment>
<comment type="PTM">
    <text>Phosphorylated by ArcB.</text>
</comment>
<gene>
    <name type="primary">arcA</name>
    <name type="synonym">cpxC</name>
    <name type="synonym">dye</name>
    <name type="synonym">fexA</name>
    <name type="synonym">msp</name>
    <name type="synonym">seg</name>
    <name type="synonym">sfrA</name>
    <name type="ordered locus">b4401</name>
    <name type="ordered locus">JW4364</name>
</gene>
<evidence type="ECO:0000255" key="1">
    <source>
        <dbReference type="PROSITE-ProRule" id="PRU00169"/>
    </source>
</evidence>
<evidence type="ECO:0000255" key="2">
    <source>
        <dbReference type="PROSITE-ProRule" id="PRU01091"/>
    </source>
</evidence>
<evidence type="ECO:0000305" key="3"/>
<evidence type="ECO:0007829" key="4">
    <source>
        <dbReference type="PDB" id="1XHF"/>
    </source>
</evidence>
<sequence length="238" mass="27292">MQTPHILIVEDELVTRNTLKSIFEAEGYDVFEATDGAEMHQILSEYDINLVIMDINLPGKNGLLLARELREQANVALMFLTGRDNEVDKILGLEIGADDYITKPFNPRELTIRARNLLSRTMNLGTVSEERRSVESYKFNGWELDINSRSLIGPDGEQYKLPRSEFRAMLHFCENPGKIQSRAELLKKMTGRELKPHDRTVDVTIRRIRKHFESTPDTPEIIATIHGEGYRFCGDLED</sequence>
<feature type="chain" id="PRO_0000081008" description="Aerobic respiration control protein ArcA">
    <location>
        <begin position="1"/>
        <end position="238"/>
    </location>
</feature>
<feature type="domain" description="Response regulatory" evidence="1">
    <location>
        <begin position="5"/>
        <end position="118"/>
    </location>
</feature>
<feature type="DNA-binding region" description="OmpR/PhoB-type" evidence="2">
    <location>
        <begin position="134"/>
        <end position="234"/>
    </location>
</feature>
<feature type="modified residue" description="4-aspartylphosphate" evidence="1">
    <location>
        <position position="54"/>
    </location>
</feature>
<feature type="strand" evidence="4">
    <location>
        <begin position="5"/>
        <end position="9"/>
    </location>
</feature>
<feature type="helix" evidence="4">
    <location>
        <begin position="13"/>
        <end position="24"/>
    </location>
</feature>
<feature type="turn" evidence="4">
    <location>
        <begin position="25"/>
        <end position="27"/>
    </location>
</feature>
<feature type="strand" evidence="4">
    <location>
        <begin position="29"/>
        <end position="35"/>
    </location>
</feature>
<feature type="helix" evidence="4">
    <location>
        <begin position="36"/>
        <end position="45"/>
    </location>
</feature>
<feature type="strand" evidence="4">
    <location>
        <begin position="49"/>
        <end position="53"/>
    </location>
</feature>
<feature type="strand" evidence="4">
    <location>
        <begin position="58"/>
        <end position="60"/>
    </location>
</feature>
<feature type="helix" evidence="4">
    <location>
        <begin position="62"/>
        <end position="72"/>
    </location>
</feature>
<feature type="strand" evidence="4">
    <location>
        <begin position="76"/>
        <end position="82"/>
    </location>
</feature>
<feature type="helix" evidence="4">
    <location>
        <begin position="86"/>
        <end position="95"/>
    </location>
</feature>
<feature type="strand" evidence="4">
    <location>
        <begin position="98"/>
        <end position="104"/>
    </location>
</feature>
<feature type="helix" evidence="4">
    <location>
        <begin position="107"/>
        <end position="121"/>
    </location>
</feature>
<name>ARCA_ECOLI</name>
<keyword id="KW-0002">3D-structure</keyword>
<keyword id="KW-0010">Activator</keyword>
<keyword id="KW-0963">Cytoplasm</keyword>
<keyword id="KW-0903">Direct protein sequencing</keyword>
<keyword id="KW-0238">DNA-binding</keyword>
<keyword id="KW-0597">Phosphoprotein</keyword>
<keyword id="KW-1185">Reference proteome</keyword>
<keyword id="KW-0678">Repressor</keyword>
<keyword id="KW-0804">Transcription</keyword>
<keyword id="KW-0805">Transcription regulation</keyword>
<keyword id="KW-0902">Two-component regulatory system</keyword>
<proteinExistence type="evidence at protein level"/>
<accession>P0A9Q1</accession>
<accession>P03026</accession>
<accession>Q2M5R6</accession>
<reference key="1">
    <citation type="journal article" date="1985" name="J. Biol. Chem.">
        <title>DNA sequence analysis of the dye gene of Escherichia coli reveals amino acid homology between the dye and OmpR proteins.</title>
        <authorList>
            <person name="Drury L.S."/>
            <person name="Buxton R.S."/>
        </authorList>
    </citation>
    <scope>NUCLEOTIDE SEQUENCE [GENOMIC DNA]</scope>
</reference>
<reference key="2">
    <citation type="journal article" date="1995" name="Nucleic Acids Res.">
        <title>Analysis of the Escherichia coli genome VI: DNA sequence of the region from 92.8 through 100 minutes.</title>
        <authorList>
            <person name="Burland V.D."/>
            <person name="Plunkett G. III"/>
            <person name="Sofia H.J."/>
            <person name="Daniels D.L."/>
            <person name="Blattner F.R."/>
        </authorList>
    </citation>
    <scope>NUCLEOTIDE SEQUENCE [LARGE SCALE GENOMIC DNA]</scope>
    <source>
        <strain>K12 / MG1655 / ATCC 47076</strain>
    </source>
</reference>
<reference key="3">
    <citation type="journal article" date="1997" name="Science">
        <title>The complete genome sequence of Escherichia coli K-12.</title>
        <authorList>
            <person name="Blattner F.R."/>
            <person name="Plunkett G. III"/>
            <person name="Bloch C.A."/>
            <person name="Perna N.T."/>
            <person name="Burland V."/>
            <person name="Riley M."/>
            <person name="Collado-Vides J."/>
            <person name="Glasner J.D."/>
            <person name="Rode C.K."/>
            <person name="Mayhew G.F."/>
            <person name="Gregor J."/>
            <person name="Davis N.W."/>
            <person name="Kirkpatrick H.A."/>
            <person name="Goeden M.A."/>
            <person name="Rose D.J."/>
            <person name="Mau B."/>
            <person name="Shao Y."/>
        </authorList>
    </citation>
    <scope>NUCLEOTIDE SEQUENCE [LARGE SCALE GENOMIC DNA]</scope>
    <source>
        <strain>K12 / MG1655 / ATCC 47076</strain>
    </source>
</reference>
<reference key="4">
    <citation type="journal article" date="2006" name="Mol. Syst. Biol.">
        <title>Highly accurate genome sequences of Escherichia coli K-12 strains MG1655 and W3110.</title>
        <authorList>
            <person name="Hayashi K."/>
            <person name="Morooka N."/>
            <person name="Yamamoto Y."/>
            <person name="Fujita K."/>
            <person name="Isono K."/>
            <person name="Choi S."/>
            <person name="Ohtsubo E."/>
            <person name="Baba T."/>
            <person name="Wanner B.L."/>
            <person name="Mori H."/>
            <person name="Horiuchi T."/>
        </authorList>
    </citation>
    <scope>NUCLEOTIDE SEQUENCE [LARGE SCALE GENOMIC DNA]</scope>
    <source>
        <strain>K12 / W3110 / ATCC 27325 / DSM 5911</strain>
    </source>
</reference>
<reference key="5">
    <citation type="submission" date="1994-06" db="EMBL/GenBank/DDBJ databases">
        <authorList>
            <person name="Park S.J."/>
            <person name="Gunsalus R.P."/>
        </authorList>
    </citation>
    <scope>NUCLEOTIDE SEQUENCE [GENOMIC DNA] OF 1-23</scope>
    <source>
        <strain>K12</strain>
    </source>
</reference>
<reference key="6">
    <citation type="journal article" date="1997" name="Electrophoresis">
        <title>Comparing the predicted and observed properties of proteins encoded in the genome of Escherichia coli K-12.</title>
        <authorList>
            <person name="Link A.J."/>
            <person name="Robison K."/>
            <person name="Church G.M."/>
        </authorList>
    </citation>
    <scope>PROTEIN SEQUENCE OF 1-12</scope>
    <source>
        <strain>K12 / EMG2</strain>
    </source>
</reference>
<reference key="7">
    <citation type="journal article" date="1995" name="Mol. Microbiol.">
        <title>Purification of ArcA and analysis of its specific interaction with the pfl promoter-regulatory region.</title>
        <authorList>
            <person name="Drapal N."/>
            <person name="Sawers G."/>
        </authorList>
    </citation>
    <scope>PROTEIN SEQUENCE OF 40-45 AND 123-128</scope>
    <scope>CHARACTERIZATION</scope>
</reference>